<sequence length="203" mass="21672">MSPLTQTLLMILAAYLAGSISSAVLVCRMRGLPDPRLQGSGNPGATNVLRIGGASSAAMVLFFDMLKGAVPSYLAYLMGIDAVSLGLIAIAACLGHIYPVFFGFKGGKGVATAFGAMAPIGDDLAICLMASWVVLLLISRYSSLAAILTALLAPLYTWWLDDRFTIPVAMLSTLIIIRHKDNIQRLLKGEESKVSRKKRPKKS</sequence>
<name>PLSY_SHEB8</name>
<reference key="1">
    <citation type="submission" date="2007-07" db="EMBL/GenBank/DDBJ databases">
        <title>Complete sequence of chromosome of Shewanella baltica OS185.</title>
        <authorList>
            <consortium name="US DOE Joint Genome Institute"/>
            <person name="Copeland A."/>
            <person name="Lucas S."/>
            <person name="Lapidus A."/>
            <person name="Barry K."/>
            <person name="Glavina del Rio T."/>
            <person name="Dalin E."/>
            <person name="Tice H."/>
            <person name="Pitluck S."/>
            <person name="Sims D."/>
            <person name="Brettin T."/>
            <person name="Bruce D."/>
            <person name="Detter J.C."/>
            <person name="Han C."/>
            <person name="Schmutz J."/>
            <person name="Larimer F."/>
            <person name="Land M."/>
            <person name="Hauser L."/>
            <person name="Kyrpides N."/>
            <person name="Mikhailova N."/>
            <person name="Brettar I."/>
            <person name="Rodrigues J."/>
            <person name="Konstantinidis K."/>
            <person name="Tiedje J."/>
            <person name="Richardson P."/>
        </authorList>
    </citation>
    <scope>NUCLEOTIDE SEQUENCE [LARGE SCALE GENOMIC DNA]</scope>
    <source>
        <strain>OS185</strain>
    </source>
</reference>
<accession>A6WKK5</accession>
<organism>
    <name type="scientific">Shewanella baltica (strain OS185)</name>
    <dbReference type="NCBI Taxonomy" id="402882"/>
    <lineage>
        <taxon>Bacteria</taxon>
        <taxon>Pseudomonadati</taxon>
        <taxon>Pseudomonadota</taxon>
        <taxon>Gammaproteobacteria</taxon>
        <taxon>Alteromonadales</taxon>
        <taxon>Shewanellaceae</taxon>
        <taxon>Shewanella</taxon>
    </lineage>
</organism>
<dbReference type="EC" id="2.3.1.275" evidence="1"/>
<dbReference type="EMBL" id="CP000753">
    <property type="protein sequence ID" value="ABS07344.1"/>
    <property type="molecule type" value="Genomic_DNA"/>
</dbReference>
<dbReference type="RefSeq" id="WP_006080727.1">
    <property type="nucleotide sequence ID" value="NC_009665.1"/>
</dbReference>
<dbReference type="SMR" id="A6WKK5"/>
<dbReference type="GeneID" id="11771502"/>
<dbReference type="KEGG" id="sbm:Shew185_1193"/>
<dbReference type="HOGENOM" id="CLU_081254_0_2_6"/>
<dbReference type="UniPathway" id="UPA00085"/>
<dbReference type="GO" id="GO:0005886">
    <property type="term" value="C:plasma membrane"/>
    <property type="evidence" value="ECO:0007669"/>
    <property type="project" value="UniProtKB-SubCell"/>
</dbReference>
<dbReference type="GO" id="GO:0043772">
    <property type="term" value="F:acyl-phosphate glycerol-3-phosphate acyltransferase activity"/>
    <property type="evidence" value="ECO:0007669"/>
    <property type="project" value="UniProtKB-UniRule"/>
</dbReference>
<dbReference type="GO" id="GO:0008654">
    <property type="term" value="P:phospholipid biosynthetic process"/>
    <property type="evidence" value="ECO:0007669"/>
    <property type="project" value="UniProtKB-UniRule"/>
</dbReference>
<dbReference type="HAMAP" id="MF_01043">
    <property type="entry name" value="PlsY"/>
    <property type="match status" value="1"/>
</dbReference>
<dbReference type="InterPro" id="IPR003811">
    <property type="entry name" value="G3P_acylTferase_PlsY"/>
</dbReference>
<dbReference type="NCBIfam" id="TIGR00023">
    <property type="entry name" value="glycerol-3-phosphate 1-O-acyltransferase PlsY"/>
    <property type="match status" value="1"/>
</dbReference>
<dbReference type="PANTHER" id="PTHR30309:SF0">
    <property type="entry name" value="GLYCEROL-3-PHOSPHATE ACYLTRANSFERASE-RELATED"/>
    <property type="match status" value="1"/>
</dbReference>
<dbReference type="PANTHER" id="PTHR30309">
    <property type="entry name" value="INNER MEMBRANE PROTEIN YGIH"/>
    <property type="match status" value="1"/>
</dbReference>
<dbReference type="Pfam" id="PF02660">
    <property type="entry name" value="G3P_acyltransf"/>
    <property type="match status" value="1"/>
</dbReference>
<dbReference type="SMART" id="SM01207">
    <property type="entry name" value="G3P_acyltransf"/>
    <property type="match status" value="1"/>
</dbReference>
<gene>
    <name evidence="1" type="primary">plsY</name>
    <name type="ordered locus">Shew185_1193</name>
</gene>
<protein>
    <recommendedName>
        <fullName evidence="1">Glycerol-3-phosphate acyltransferase</fullName>
    </recommendedName>
    <alternativeName>
        <fullName evidence="1">Acyl-PO4 G3P acyltransferase</fullName>
    </alternativeName>
    <alternativeName>
        <fullName evidence="1">Acyl-phosphate--glycerol-3-phosphate acyltransferase</fullName>
    </alternativeName>
    <alternativeName>
        <fullName evidence="1">G3P acyltransferase</fullName>
        <shortName evidence="1">GPAT</shortName>
        <ecNumber evidence="1">2.3.1.275</ecNumber>
    </alternativeName>
    <alternativeName>
        <fullName evidence="1">Lysophosphatidic acid synthase</fullName>
        <shortName evidence="1">LPA synthase</shortName>
    </alternativeName>
</protein>
<keyword id="KW-0997">Cell inner membrane</keyword>
<keyword id="KW-1003">Cell membrane</keyword>
<keyword id="KW-0444">Lipid biosynthesis</keyword>
<keyword id="KW-0443">Lipid metabolism</keyword>
<keyword id="KW-0472">Membrane</keyword>
<keyword id="KW-0594">Phospholipid biosynthesis</keyword>
<keyword id="KW-1208">Phospholipid metabolism</keyword>
<keyword id="KW-0808">Transferase</keyword>
<keyword id="KW-0812">Transmembrane</keyword>
<keyword id="KW-1133">Transmembrane helix</keyword>
<comment type="function">
    <text evidence="1">Catalyzes the transfer of an acyl group from acyl-phosphate (acyl-PO(4)) to glycerol-3-phosphate (G3P) to form lysophosphatidic acid (LPA). This enzyme utilizes acyl-phosphate as fatty acyl donor, but not acyl-CoA or acyl-ACP.</text>
</comment>
<comment type="catalytic activity">
    <reaction evidence="1">
        <text>an acyl phosphate + sn-glycerol 3-phosphate = a 1-acyl-sn-glycero-3-phosphate + phosphate</text>
        <dbReference type="Rhea" id="RHEA:34075"/>
        <dbReference type="ChEBI" id="CHEBI:43474"/>
        <dbReference type="ChEBI" id="CHEBI:57597"/>
        <dbReference type="ChEBI" id="CHEBI:57970"/>
        <dbReference type="ChEBI" id="CHEBI:59918"/>
        <dbReference type="EC" id="2.3.1.275"/>
    </reaction>
</comment>
<comment type="pathway">
    <text evidence="1">Lipid metabolism; phospholipid metabolism.</text>
</comment>
<comment type="subunit">
    <text evidence="1">Probably interacts with PlsX.</text>
</comment>
<comment type="subcellular location">
    <subcellularLocation>
        <location evidence="1">Cell inner membrane</location>
        <topology evidence="1">Multi-pass membrane protein</topology>
    </subcellularLocation>
</comment>
<comment type="similarity">
    <text evidence="1">Belongs to the PlsY family.</text>
</comment>
<evidence type="ECO:0000255" key="1">
    <source>
        <dbReference type="HAMAP-Rule" id="MF_01043"/>
    </source>
</evidence>
<proteinExistence type="inferred from homology"/>
<feature type="chain" id="PRO_1000064221" description="Glycerol-3-phosphate acyltransferase">
    <location>
        <begin position="1"/>
        <end position="203"/>
    </location>
</feature>
<feature type="transmembrane region" description="Helical" evidence="1">
    <location>
        <begin position="7"/>
        <end position="27"/>
    </location>
</feature>
<feature type="transmembrane region" description="Helical" evidence="1">
    <location>
        <begin position="82"/>
        <end position="102"/>
    </location>
</feature>
<feature type="transmembrane region" description="Helical" evidence="1">
    <location>
        <begin position="118"/>
        <end position="138"/>
    </location>
</feature>
<feature type="transmembrane region" description="Helical" evidence="1">
    <location>
        <begin position="141"/>
        <end position="161"/>
    </location>
</feature>